<keyword id="KW-1003">Cell membrane</keyword>
<keyword id="KW-0133">Cell shape</keyword>
<keyword id="KW-0961">Cell wall biogenesis/degradation</keyword>
<keyword id="KW-0325">Glycoprotein</keyword>
<keyword id="KW-0328">Glycosyltransferase</keyword>
<keyword id="KW-0472">Membrane</keyword>
<keyword id="KW-1185">Reference proteome</keyword>
<keyword id="KW-0808">Transferase</keyword>
<keyword id="KW-0812">Transmembrane</keyword>
<keyword id="KW-1133">Transmembrane helix</keyword>
<proteinExistence type="evidence at transcript level"/>
<feature type="chain" id="PRO_0000334584" description="Callose synthase 12">
    <location>
        <begin position="1"/>
        <end position="1780"/>
    </location>
</feature>
<feature type="topological domain" description="Cytoplasmic" evidence="1">
    <location>
        <begin position="1"/>
        <end position="302"/>
    </location>
</feature>
<feature type="transmembrane region" description="Helical" evidence="1">
    <location>
        <begin position="303"/>
        <end position="323"/>
    </location>
</feature>
<feature type="topological domain" description="Extracellular" evidence="1">
    <location>
        <begin position="324"/>
        <end position="348"/>
    </location>
</feature>
<feature type="transmembrane region" description="Helical" evidence="1">
    <location>
        <begin position="349"/>
        <end position="369"/>
    </location>
</feature>
<feature type="topological domain" description="Cytoplasmic" evidence="1">
    <location>
        <begin position="370"/>
        <end position="386"/>
    </location>
</feature>
<feature type="transmembrane region" description="Helical" evidence="1">
    <location>
        <begin position="387"/>
        <end position="407"/>
    </location>
</feature>
<feature type="topological domain" description="Extracellular" evidence="1">
    <location>
        <begin position="408"/>
        <end position="427"/>
    </location>
</feature>
<feature type="transmembrane region" description="Helical" evidence="1">
    <location>
        <begin position="428"/>
        <end position="448"/>
    </location>
</feature>
<feature type="topological domain" description="Cytoplasmic" evidence="1">
    <location>
        <begin position="449"/>
        <end position="489"/>
    </location>
</feature>
<feature type="transmembrane region" description="Helical" evidence="1">
    <location>
        <begin position="490"/>
        <end position="510"/>
    </location>
</feature>
<feature type="topological domain" description="Extracellular" evidence="1">
    <location>
        <begin position="511"/>
        <end position="542"/>
    </location>
</feature>
<feature type="transmembrane region" description="Helical" evidence="1">
    <location>
        <begin position="543"/>
        <end position="563"/>
    </location>
</feature>
<feature type="topological domain" description="Cytoplasmic" evidence="1">
    <location>
        <begin position="564"/>
        <end position="1348"/>
    </location>
</feature>
<feature type="transmembrane region" description="Helical" evidence="1">
    <location>
        <begin position="1349"/>
        <end position="1369"/>
    </location>
</feature>
<feature type="topological domain" description="Extracellular" evidence="1">
    <location>
        <begin position="1370"/>
        <end position="1394"/>
    </location>
</feature>
<feature type="transmembrane region" description="Helical" evidence="1">
    <location>
        <begin position="1395"/>
        <end position="1415"/>
    </location>
</feature>
<feature type="topological domain" description="Cytoplasmic" evidence="1">
    <location>
        <begin position="1416"/>
        <end position="1421"/>
    </location>
</feature>
<feature type="transmembrane region" description="Helical" evidence="1">
    <location>
        <begin position="1422"/>
        <end position="1442"/>
    </location>
</feature>
<feature type="topological domain" description="Extracellular" evidence="1">
    <location>
        <begin position="1443"/>
        <end position="1489"/>
    </location>
</feature>
<feature type="transmembrane region" description="Helical" evidence="1">
    <location>
        <begin position="1490"/>
        <end position="1510"/>
    </location>
</feature>
<feature type="topological domain" description="Cytoplasmic" evidence="1">
    <location>
        <begin position="1511"/>
        <end position="1516"/>
    </location>
</feature>
<feature type="transmembrane region" description="Helical" evidence="1">
    <location>
        <begin position="1517"/>
        <end position="1537"/>
    </location>
</feature>
<feature type="topological domain" description="Extracellular" evidence="1">
    <location>
        <begin position="1538"/>
        <end position="1588"/>
    </location>
</feature>
<feature type="transmembrane region" description="Helical" evidence="1">
    <location>
        <begin position="1589"/>
        <end position="1609"/>
    </location>
</feature>
<feature type="topological domain" description="Cytoplasmic" evidence="1">
    <location>
        <begin position="1610"/>
        <end position="1620"/>
    </location>
</feature>
<feature type="transmembrane region" description="Helical" evidence="1">
    <location>
        <begin position="1621"/>
        <end position="1641"/>
    </location>
</feature>
<feature type="topological domain" description="Extracellular" evidence="1">
    <location>
        <begin position="1642"/>
        <end position="1657"/>
    </location>
</feature>
<feature type="transmembrane region" description="Helical" evidence="1">
    <location>
        <begin position="1658"/>
        <end position="1678"/>
    </location>
</feature>
<feature type="topological domain" description="Cytoplasmic" evidence="1">
    <location>
        <begin position="1679"/>
        <end position="1681"/>
    </location>
</feature>
<feature type="transmembrane region" description="Helical" evidence="1">
    <location>
        <begin position="1682"/>
        <end position="1702"/>
    </location>
</feature>
<feature type="topological domain" description="Extracellular" evidence="1">
    <location>
        <begin position="1703"/>
        <end position="1728"/>
    </location>
</feature>
<feature type="transmembrane region" description="Helical" evidence="1">
    <location>
        <begin position="1729"/>
        <end position="1749"/>
    </location>
</feature>
<feature type="topological domain" description="Cytoplasmic" evidence="1">
    <location>
        <begin position="1750"/>
        <end position="1780"/>
    </location>
</feature>
<feature type="glycosylation site" description="N-linked (GlcNAc...) asparagine" evidence="1">
    <location>
        <position position="1712"/>
    </location>
</feature>
<reference key="1">
    <citation type="journal article" date="1999" name="Nature">
        <title>Sequence and analysis of chromosome 4 of the plant Arabidopsis thaliana.</title>
        <authorList>
            <person name="Mayer K.F.X."/>
            <person name="Schueller C."/>
            <person name="Wambutt R."/>
            <person name="Murphy G."/>
            <person name="Volckaert G."/>
            <person name="Pohl T."/>
            <person name="Duesterhoeft A."/>
            <person name="Stiekema W."/>
            <person name="Entian K.-D."/>
            <person name="Terryn N."/>
            <person name="Harris B."/>
            <person name="Ansorge W."/>
            <person name="Brandt P."/>
            <person name="Grivell L.A."/>
            <person name="Rieger M."/>
            <person name="Weichselgartner M."/>
            <person name="de Simone V."/>
            <person name="Obermaier B."/>
            <person name="Mache R."/>
            <person name="Mueller M."/>
            <person name="Kreis M."/>
            <person name="Delseny M."/>
            <person name="Puigdomenech P."/>
            <person name="Watson M."/>
            <person name="Schmidtheini T."/>
            <person name="Reichert B."/>
            <person name="Portetelle D."/>
            <person name="Perez-Alonso M."/>
            <person name="Boutry M."/>
            <person name="Bancroft I."/>
            <person name="Vos P."/>
            <person name="Hoheisel J."/>
            <person name="Zimmermann W."/>
            <person name="Wedler H."/>
            <person name="Ridley P."/>
            <person name="Langham S.-A."/>
            <person name="McCullagh B."/>
            <person name="Bilham L."/>
            <person name="Robben J."/>
            <person name="van der Schueren J."/>
            <person name="Grymonprez B."/>
            <person name="Chuang Y.-J."/>
            <person name="Vandenbussche F."/>
            <person name="Braeken M."/>
            <person name="Weltjens I."/>
            <person name="Voet M."/>
            <person name="Bastiaens I."/>
            <person name="Aert R."/>
            <person name="Defoor E."/>
            <person name="Weitzenegger T."/>
            <person name="Bothe G."/>
            <person name="Ramsperger U."/>
            <person name="Hilbert H."/>
            <person name="Braun M."/>
            <person name="Holzer E."/>
            <person name="Brandt A."/>
            <person name="Peters S."/>
            <person name="van Staveren M."/>
            <person name="Dirkse W."/>
            <person name="Mooijman P."/>
            <person name="Klein Lankhorst R."/>
            <person name="Rose M."/>
            <person name="Hauf J."/>
            <person name="Koetter P."/>
            <person name="Berneiser S."/>
            <person name="Hempel S."/>
            <person name="Feldpausch M."/>
            <person name="Lamberth S."/>
            <person name="Van den Daele H."/>
            <person name="De Keyser A."/>
            <person name="Buysshaert C."/>
            <person name="Gielen J."/>
            <person name="Villarroel R."/>
            <person name="De Clercq R."/>
            <person name="van Montagu M."/>
            <person name="Rogers J."/>
            <person name="Cronin A."/>
            <person name="Quail M.A."/>
            <person name="Bray-Allen S."/>
            <person name="Clark L."/>
            <person name="Doggett J."/>
            <person name="Hall S."/>
            <person name="Kay M."/>
            <person name="Lennard N."/>
            <person name="McLay K."/>
            <person name="Mayes R."/>
            <person name="Pettett A."/>
            <person name="Rajandream M.A."/>
            <person name="Lyne M."/>
            <person name="Benes V."/>
            <person name="Rechmann S."/>
            <person name="Borkova D."/>
            <person name="Bloecker H."/>
            <person name="Scharfe M."/>
            <person name="Grimm M."/>
            <person name="Loehnert T.-H."/>
            <person name="Dose S."/>
            <person name="de Haan M."/>
            <person name="Maarse A.C."/>
            <person name="Schaefer M."/>
            <person name="Mueller-Auer S."/>
            <person name="Gabel C."/>
            <person name="Fuchs M."/>
            <person name="Fartmann B."/>
            <person name="Granderath K."/>
            <person name="Dauner D."/>
            <person name="Herzl A."/>
            <person name="Neumann S."/>
            <person name="Argiriou A."/>
            <person name="Vitale D."/>
            <person name="Liguori R."/>
            <person name="Piravandi E."/>
            <person name="Massenet O."/>
            <person name="Quigley F."/>
            <person name="Clabauld G."/>
            <person name="Muendlein A."/>
            <person name="Felber R."/>
            <person name="Schnabl S."/>
            <person name="Hiller R."/>
            <person name="Schmidt W."/>
            <person name="Lecharny A."/>
            <person name="Aubourg S."/>
            <person name="Chefdor F."/>
            <person name="Cooke R."/>
            <person name="Berger C."/>
            <person name="Monfort A."/>
            <person name="Casacuberta E."/>
            <person name="Gibbons T."/>
            <person name="Weber N."/>
            <person name="Vandenbol M."/>
            <person name="Bargues M."/>
            <person name="Terol J."/>
            <person name="Torres A."/>
            <person name="Perez-Perez A."/>
            <person name="Purnelle B."/>
            <person name="Bent E."/>
            <person name="Johnson S."/>
            <person name="Tacon D."/>
            <person name="Jesse T."/>
            <person name="Heijnen L."/>
            <person name="Schwarz S."/>
            <person name="Scholler P."/>
            <person name="Heber S."/>
            <person name="Francs P."/>
            <person name="Bielke C."/>
            <person name="Frishman D."/>
            <person name="Haase D."/>
            <person name="Lemcke K."/>
            <person name="Mewes H.-W."/>
            <person name="Stocker S."/>
            <person name="Zaccaria P."/>
            <person name="Bevan M."/>
            <person name="Wilson R.K."/>
            <person name="de la Bastide M."/>
            <person name="Habermann K."/>
            <person name="Parnell L."/>
            <person name="Dedhia N."/>
            <person name="Gnoj L."/>
            <person name="Schutz K."/>
            <person name="Huang E."/>
            <person name="Spiegel L."/>
            <person name="Sekhon M."/>
            <person name="Murray J."/>
            <person name="Sheet P."/>
            <person name="Cordes M."/>
            <person name="Abu-Threideh J."/>
            <person name="Stoneking T."/>
            <person name="Kalicki J."/>
            <person name="Graves T."/>
            <person name="Harmon G."/>
            <person name="Edwards J."/>
            <person name="Latreille P."/>
            <person name="Courtney L."/>
            <person name="Cloud J."/>
            <person name="Abbott A."/>
            <person name="Scott K."/>
            <person name="Johnson D."/>
            <person name="Minx P."/>
            <person name="Bentley D."/>
            <person name="Fulton B."/>
            <person name="Miller N."/>
            <person name="Greco T."/>
            <person name="Kemp K."/>
            <person name="Kramer J."/>
            <person name="Fulton L."/>
            <person name="Mardis E."/>
            <person name="Dante M."/>
            <person name="Pepin K."/>
            <person name="Hillier L.W."/>
            <person name="Nelson J."/>
            <person name="Spieth J."/>
            <person name="Ryan E."/>
            <person name="Andrews S."/>
            <person name="Geisel C."/>
            <person name="Layman D."/>
            <person name="Du H."/>
            <person name="Ali J."/>
            <person name="Berghoff A."/>
            <person name="Jones K."/>
            <person name="Drone K."/>
            <person name="Cotton M."/>
            <person name="Joshu C."/>
            <person name="Antonoiu B."/>
            <person name="Zidanic M."/>
            <person name="Strong C."/>
            <person name="Sun H."/>
            <person name="Lamar B."/>
            <person name="Yordan C."/>
            <person name="Ma P."/>
            <person name="Zhong J."/>
            <person name="Preston R."/>
            <person name="Vil D."/>
            <person name="Shekher M."/>
            <person name="Matero A."/>
            <person name="Shah R."/>
            <person name="Swaby I.K."/>
            <person name="O'Shaughnessy A."/>
            <person name="Rodriguez M."/>
            <person name="Hoffman J."/>
            <person name="Till S."/>
            <person name="Granat S."/>
            <person name="Shohdy N."/>
            <person name="Hasegawa A."/>
            <person name="Hameed A."/>
            <person name="Lodhi M."/>
            <person name="Johnson A."/>
            <person name="Chen E."/>
            <person name="Marra M.A."/>
            <person name="Martienssen R."/>
            <person name="McCombie W.R."/>
        </authorList>
    </citation>
    <scope>NUCLEOTIDE SEQUENCE [LARGE SCALE GENOMIC DNA]</scope>
    <source>
        <strain>cv. Columbia</strain>
    </source>
</reference>
<reference key="2">
    <citation type="journal article" date="2017" name="Plant J.">
        <title>Araport11: a complete reannotation of the Arabidopsis thaliana reference genome.</title>
        <authorList>
            <person name="Cheng C.Y."/>
            <person name="Krishnakumar V."/>
            <person name="Chan A.P."/>
            <person name="Thibaud-Nissen F."/>
            <person name="Schobel S."/>
            <person name="Town C.D."/>
        </authorList>
    </citation>
    <scope>GENOME REANNOTATION</scope>
    <source>
        <strain>cv. Columbia</strain>
    </source>
</reference>
<reference key="3">
    <citation type="journal article" date="2001" name="Plant Cell">
        <title>A cell plate-specific callose synthase and its interaction with phragmoplastin.</title>
        <authorList>
            <person name="Hong Z."/>
            <person name="Delauney A.J."/>
            <person name="Verma D.P.S."/>
        </authorList>
    </citation>
    <scope>GENE FAMILY</scope>
    <scope>NOMENCLATURE</scope>
</reference>
<reference key="4">
    <citation type="journal article" date="2002" name="Plant Mol. Biol.">
        <title>An Arabidopsis callose synthase.</title>
        <authorList>
            <person name="Oestergaard L."/>
            <person name="Petersen M."/>
            <person name="Mattsson O."/>
            <person name="Mundy J."/>
        </authorList>
    </citation>
    <scope>FUNCTION</scope>
    <scope>SUBCELLULAR LOCATION</scope>
    <scope>TISSUE SPECIFICITY</scope>
    <scope>INDUCTION</scope>
</reference>
<reference key="5">
    <citation type="journal article" date="2003" name="Plant Cell">
        <title>An Arabidopsis callose synthase, GSL5, is required for wound and papillary callose formation.</title>
        <authorList>
            <person name="Jacobs A.K."/>
            <person name="Lipka V."/>
            <person name="Burton R.A."/>
            <person name="Panstruga R."/>
            <person name="Strizhov N."/>
            <person name="Schulze-Lefert P."/>
            <person name="Fincher G.B."/>
        </authorList>
    </citation>
    <scope>FUNCTION</scope>
</reference>
<reference key="6">
    <citation type="journal article" date="2003" name="Science">
        <title>Loss of a callose synthase results in salicylic acid-dependent disease resistance.</title>
        <authorList>
            <person name="Nishimura M.T."/>
            <person name="Stein M."/>
            <person name="Hou B.-H."/>
            <person name="Vogel J.P."/>
            <person name="Edwards H."/>
            <person name="Somerville S.C."/>
        </authorList>
    </citation>
    <scope>FUNCTION</scope>
</reference>
<reference key="7">
    <citation type="journal article" date="2005" name="Plant Mol. Biol.">
        <title>Two callose synthases, GSL1 and GSL5, play an essential and redundant role in plant and pollen development and in fertility.</title>
        <authorList>
            <person name="Enns L.C."/>
            <person name="Kanaoka M.M."/>
            <person name="Torii K.U."/>
            <person name="Comai L."/>
            <person name="Okada K."/>
            <person name="Cleland R.E."/>
        </authorList>
    </citation>
    <scope>FUNCTION</scope>
    <scope>TISSUE SPECIFICITY</scope>
    <scope>NOMENCLATURE</scope>
    <scope>DISRUPTION PHENOTYPE</scope>
</reference>
<protein>
    <recommendedName>
        <fullName>Callose synthase 12</fullName>
        <ecNumber>2.4.1.34</ecNumber>
    </recommendedName>
    <alternativeName>
        <fullName>1,3-beta-glucan synthase</fullName>
    </alternativeName>
    <alternativeName>
        <fullName>Protein GLUCAN SYNTHASE-LIKE 5</fullName>
    </alternativeName>
    <alternativeName>
        <fullName>Protein POWDERY MILDEW RESISTANT 4</fullName>
    </alternativeName>
</protein>
<sequence length="1780" mass="206912">MSLRHRTVPPQTGRPLAAEAVGIEEEPYNIIPVNNLLADHPSLRFPEVRAAAAALKTVGDLRRPPYVQWRSHYDLLDWLALFFGFQKDNVRNQREHMVLHLANAQMRLSPPPDNIDSLDSAVVRRFRRKLLANYSSWCSYLGKKSNIWISDRNPDSRRELLYVGLYLLIWGEAANLRFMPECICYIFHNMASELNKILEDCLDENTGQPYLPSLSGENAFLTGVVKPIYDTIQAEIDESKNGTVAHCKWRNYDDINEYFWTDRCFSKLKWPLDLGSNFFKSRGKSVGKTGFVERRTFFYLYRSFDRLWVMLALFLQAAIIVAWEEKPDTSSVTRQLWNALKARDVQVRLLTVFLTWSGMRLLQAVLDAASQYPLVSRETKRHFFRMLMKVIAAAVWIVAFTVLYTNIWKQKRQDRQWSNAATTKIYQFLYAVGAFLVPEILALALFIIPWMRNFLEETNWKIFFALTWWFQGKSFVGRGLREGLVDNIKYSTFWIFVLATKFTFSYFLQVKPMIKPSKLLWNLKDVDYEWHQFYGDSNRFSVALLWLPVVLIYLMDIQIWYAIYSSIVGAVVGLFDHLGEIRDMGQLRLRFQFFASAIQFNLMPEEQLLNARGFGNKFKDGIHRLKLRYGFGRPFKKLESNQVEANKFALIWNEIILAFREEDIVSDREVELLELPKNSWDVTVIRWPCFLLCNELLLALSQARELIDAPDKWLWHKICKNEYRRCAVVEAYDSIKHLLLSIIKVDTEEHSIITVFFQIINQSIQSEQFTKTFRVDLLPKIYETLQKLVGLVNDEETDSGRVVNVLQSLYEIATRQFFIEKKTTEQLSNEGLTPRDPASKLLFQNAIRLPDASNEDFYRQVRRLHTILTSRDSMHSVPVNLEARRRIAFFSNSLFMNMPHAPQVEKMMAFSVLTPYYSEEVVYSKEQLRNETEDGISTLYYLQTIYADEWKNFKERMHREGIKTDSELWTTKLRDLRLWASYRGQTLARTVRGMMYYYRALKMLAFLDSASEMDIREGAQELGSVRNLQGELGGQSDGFVSENDRSSLSRASSSVSTLYKGHEYGTALMKFTYVVACQIYGSQKAKKEPQAEEILYLMKQNEALRIAYVDEVPAGRGETDYYSVLVKYDHQLEKEVEIFRVKLPGPVKLGEGKPENQNHAMIFTRGDAVQTIDMNQDSYFEEALKMRNLLQEYNHYHGIRKPTILGVREHIFTGSVSSLAWFMSAQETSFVTLGQRVLANPLKVRMHYGHPDVFDRFWFLSRGGISKASRVINISEDIFAGFNCTLRGGNVTHHEYIQVGKGRDVGLNQISMFEAKVASGNGEQVLSRDVYRLGHRLDFFRMLSFFYTTVGFFFNTMMVILTVYAFLWGRVYLALSGVEKSALADSTDTNAALGVILNQQFIIQLGLFTALPMIVEWSLEEGFLLAIWNFIRMQIQLSAVFYTFSMGTRAHYFGRTILHGGAKYRATGRGFVVEHKGFTENYRLYARSHFVKAIELGLILIVYASHSPIAKDSLIYIAMTITSWFLVISWIMAPFVFNPSGFDWLKTVYDFEDFMNWIWYQGRISTKSEQSWEKWWYEEQDHLRNTGKAGLFVEIILVLRFFFFQYGIVYQLKIANGSTSLFVYLFSWIYIFAIFVLFLVIQYARDKYSAKAHIRYRLVQFLLIVLAILVIVALLEFTHFSFIDIFTSLLAFIPTGWGILLIAQTQRKWLKNYTIFWNAVVSVARMYDILFGILIMVPVAFLSWMPGFQSMQTRILFNEAFSRGLRIMQIVTGKKSKGDV</sequence>
<organism>
    <name type="scientific">Arabidopsis thaliana</name>
    <name type="common">Mouse-ear cress</name>
    <dbReference type="NCBI Taxonomy" id="3702"/>
    <lineage>
        <taxon>Eukaryota</taxon>
        <taxon>Viridiplantae</taxon>
        <taxon>Streptophyta</taxon>
        <taxon>Embryophyta</taxon>
        <taxon>Tracheophyta</taxon>
        <taxon>Spermatophyta</taxon>
        <taxon>Magnoliopsida</taxon>
        <taxon>eudicotyledons</taxon>
        <taxon>Gunneridae</taxon>
        <taxon>Pentapetalae</taxon>
        <taxon>rosids</taxon>
        <taxon>malvids</taxon>
        <taxon>Brassicales</taxon>
        <taxon>Brassicaceae</taxon>
        <taxon>Camelineae</taxon>
        <taxon>Arabidopsis</taxon>
    </lineage>
</organism>
<accession>Q9ZT82</accession>
<dbReference type="EC" id="2.4.1.34"/>
<dbReference type="EMBL" id="AC005142">
    <property type="protein sequence ID" value="AAD15311.1"/>
    <property type="molecule type" value="Genomic_DNA"/>
</dbReference>
<dbReference type="EMBL" id="AF071527">
    <property type="protein sequence ID" value="AAD11597.1"/>
    <property type="molecule type" value="Genomic_DNA"/>
</dbReference>
<dbReference type="EMBL" id="AL161497">
    <property type="protein sequence ID" value="CAB77840.1"/>
    <property type="molecule type" value="Genomic_DNA"/>
</dbReference>
<dbReference type="EMBL" id="CP002687">
    <property type="protein sequence ID" value="AEE82336.1"/>
    <property type="molecule type" value="Genomic_DNA"/>
</dbReference>
<dbReference type="PIR" id="A85045">
    <property type="entry name" value="A85045"/>
</dbReference>
<dbReference type="SASBDB" id="Q9ZT82"/>
<dbReference type="BioGRID" id="10964">
    <property type="interactions" value="3"/>
</dbReference>
<dbReference type="FunCoup" id="Q9ZT82">
    <property type="interactions" value="1223"/>
</dbReference>
<dbReference type="STRING" id="3702.Q9ZT82"/>
<dbReference type="CAZy" id="GT48">
    <property type="family name" value="Glycosyltransferase Family 48"/>
</dbReference>
<dbReference type="GlyCosmos" id="Q9ZT82">
    <property type="glycosylation" value="1 site, No reported glycans"/>
</dbReference>
<dbReference type="GlyGen" id="Q9ZT82">
    <property type="glycosylation" value="1 site"/>
</dbReference>
<dbReference type="iPTMnet" id="Q9ZT82"/>
<dbReference type="PaxDb" id="3702-AT4G03550.1"/>
<dbReference type="ProteomicsDB" id="222796"/>
<dbReference type="EnsemblPlants" id="AT4G03550.1">
    <property type="protein sequence ID" value="AT4G03550.1"/>
    <property type="gene ID" value="AT4G03550"/>
</dbReference>
<dbReference type="GeneID" id="825650"/>
<dbReference type="Gramene" id="AT4G03550.1">
    <property type="protein sequence ID" value="AT4G03550.1"/>
    <property type="gene ID" value="AT4G03550"/>
</dbReference>
<dbReference type="KEGG" id="ath:AT4G03550"/>
<dbReference type="Araport" id="AT4G03550"/>
<dbReference type="TAIR" id="AT4G03550">
    <property type="gene designation" value="GSL05"/>
</dbReference>
<dbReference type="eggNOG" id="KOG0916">
    <property type="taxonomic scope" value="Eukaryota"/>
</dbReference>
<dbReference type="HOGENOM" id="CLU_000742_1_1_1"/>
<dbReference type="InParanoid" id="Q9ZT82"/>
<dbReference type="OMA" id="GMSNIKE"/>
<dbReference type="PhylomeDB" id="Q9ZT82"/>
<dbReference type="BioCyc" id="ARA:AT4G03550-MONOMER"/>
<dbReference type="PRO" id="PR:Q9ZT82"/>
<dbReference type="Proteomes" id="UP000006548">
    <property type="component" value="Chromosome 4"/>
</dbReference>
<dbReference type="ExpressionAtlas" id="Q9ZT82">
    <property type="expression patterns" value="baseline and differential"/>
</dbReference>
<dbReference type="GO" id="GO:0000148">
    <property type="term" value="C:1,3-beta-D-glucan synthase complex"/>
    <property type="evidence" value="ECO:0007669"/>
    <property type="project" value="InterPro"/>
</dbReference>
<dbReference type="GO" id="GO:0005794">
    <property type="term" value="C:Golgi apparatus"/>
    <property type="evidence" value="ECO:0007005"/>
    <property type="project" value="TAIR"/>
</dbReference>
<dbReference type="GO" id="GO:0005886">
    <property type="term" value="C:plasma membrane"/>
    <property type="evidence" value="ECO:0007005"/>
    <property type="project" value="TAIR"/>
</dbReference>
<dbReference type="GO" id="GO:0009506">
    <property type="term" value="C:plasmodesma"/>
    <property type="evidence" value="ECO:0007005"/>
    <property type="project" value="TAIR"/>
</dbReference>
<dbReference type="GO" id="GO:0003843">
    <property type="term" value="F:1,3-beta-D-glucan synthase activity"/>
    <property type="evidence" value="ECO:0007669"/>
    <property type="project" value="UniProtKB-EC"/>
</dbReference>
<dbReference type="GO" id="GO:0006075">
    <property type="term" value="P:(1-&gt;3)-beta-D-glucan biosynthetic process"/>
    <property type="evidence" value="ECO:0007669"/>
    <property type="project" value="InterPro"/>
</dbReference>
<dbReference type="GO" id="GO:0006952">
    <property type="term" value="P:defense response"/>
    <property type="evidence" value="ECO:0000315"/>
    <property type="project" value="TAIR"/>
</dbReference>
<dbReference type="GO" id="GO:0052542">
    <property type="term" value="P:defense response by callose deposition"/>
    <property type="evidence" value="ECO:0000315"/>
    <property type="project" value="TAIR"/>
</dbReference>
<dbReference type="GO" id="GO:0052544">
    <property type="term" value="P:defense response by callose deposition in cell wall"/>
    <property type="evidence" value="ECO:0000315"/>
    <property type="project" value="TAIR"/>
</dbReference>
<dbReference type="GO" id="GO:0042742">
    <property type="term" value="P:defense response to bacterium"/>
    <property type="evidence" value="ECO:0000315"/>
    <property type="project" value="TAIR"/>
</dbReference>
<dbReference type="GO" id="GO:0050832">
    <property type="term" value="P:defense response to fungus"/>
    <property type="evidence" value="ECO:0000315"/>
    <property type="project" value="TAIR"/>
</dbReference>
<dbReference type="GO" id="GO:0002758">
    <property type="term" value="P:innate immune response-activating signaling pathway"/>
    <property type="evidence" value="ECO:0000315"/>
    <property type="project" value="TAIR"/>
</dbReference>
<dbReference type="GO" id="GO:0009965">
    <property type="term" value="P:leaf morphogenesis"/>
    <property type="evidence" value="ECO:0000315"/>
    <property type="project" value="TAIR"/>
</dbReference>
<dbReference type="GO" id="GO:0010150">
    <property type="term" value="P:leaf senescence"/>
    <property type="evidence" value="ECO:0000315"/>
    <property type="project" value="TAIR"/>
</dbReference>
<dbReference type="GO" id="GO:0009555">
    <property type="term" value="P:pollen development"/>
    <property type="evidence" value="ECO:0000316"/>
    <property type="project" value="TAIR"/>
</dbReference>
<dbReference type="GO" id="GO:0008360">
    <property type="term" value="P:regulation of cell shape"/>
    <property type="evidence" value="ECO:0007669"/>
    <property type="project" value="UniProtKB-KW"/>
</dbReference>
<dbReference type="GO" id="GO:0009620">
    <property type="term" value="P:response to fungus"/>
    <property type="evidence" value="ECO:0000315"/>
    <property type="project" value="TAIR"/>
</dbReference>
<dbReference type="GO" id="GO:0009863">
    <property type="term" value="P:salicylic acid mediated signaling pathway"/>
    <property type="evidence" value="ECO:0000270"/>
    <property type="project" value="TAIR"/>
</dbReference>
<dbReference type="InterPro" id="IPR026899">
    <property type="entry name" value="FKS1-like_dom1"/>
</dbReference>
<dbReference type="InterPro" id="IPR003440">
    <property type="entry name" value="Glyco_trans_48_dom"/>
</dbReference>
<dbReference type="PANTHER" id="PTHR12741:SF7">
    <property type="entry name" value="CALLOSE SYNTHASE 12"/>
    <property type="match status" value="1"/>
</dbReference>
<dbReference type="PANTHER" id="PTHR12741">
    <property type="entry name" value="LYST-INTERACTING PROTEIN LIP5 DOPAMINE RESPONSIVE PROTEIN DRG-1"/>
    <property type="match status" value="1"/>
</dbReference>
<dbReference type="Pfam" id="PF14288">
    <property type="entry name" value="FKS1_dom1"/>
    <property type="match status" value="1"/>
</dbReference>
<dbReference type="Pfam" id="PF02364">
    <property type="entry name" value="Glucan_synthase"/>
    <property type="match status" value="1"/>
</dbReference>
<dbReference type="SMART" id="SM01205">
    <property type="entry name" value="FKS1_dom1"/>
    <property type="match status" value="1"/>
</dbReference>
<name>CALSC_ARATH</name>
<comment type="function">
    <text evidence="2 3 4 5">Involved in sporophytic and gametophytic development. Required for normal leaf development. During pollen formation, required for the formation of the callose wall separating the tetraspores of the tetrad (interstitial wall), but not for the callose wall surrounding the pollen mother cells (peripheral wall). Functionally redudant to CALS11 (GSL1). May play a role later in pollen grain maturation. Required for callose formation induced by wounding and pathogen attack. May interfere with salicylic acid-induced signaling pathway during defense response. During plant growth and development, callose is found as a transitory component of the cell plate in dividing cells, is a major component of pollen mother cell walls and pollen tubes, and is found as a structural component of plasmodesmatal canals.</text>
</comment>
<comment type="catalytic activity">
    <reaction>
        <text>[(1-&gt;3)-beta-D-glucosyl](n) + UDP-alpha-D-glucose = [(1-&gt;3)-beta-D-glucosyl](n+1) + UDP + H(+)</text>
        <dbReference type="Rhea" id="RHEA:21476"/>
        <dbReference type="Rhea" id="RHEA-COMP:11146"/>
        <dbReference type="Rhea" id="RHEA-COMP:14303"/>
        <dbReference type="ChEBI" id="CHEBI:15378"/>
        <dbReference type="ChEBI" id="CHEBI:37671"/>
        <dbReference type="ChEBI" id="CHEBI:58223"/>
        <dbReference type="ChEBI" id="CHEBI:58885"/>
        <dbReference type="EC" id="2.4.1.34"/>
    </reaction>
</comment>
<comment type="subcellular location">
    <subcellularLocation>
        <location evidence="2">Cell membrane</location>
        <topology evidence="2">Multi-pass membrane protein</topology>
    </subcellularLocation>
</comment>
<comment type="tissue specificity">
    <text evidence="2 5">Highly expressed in flowers. Expressed at low levels in roots, leaves, stems, cauline leaves and siliques.</text>
</comment>
<comment type="induction">
    <text evidence="2">By salicylic acid (SA).</text>
</comment>
<comment type="disruption phenotype">
    <text evidence="5">Plants develop smaller leaves, and collapsed and inviable pollen grains. They are resistant to the biotrophic pathogens Erysiphe cichoracearum (powdery mildew), E.orontii and Hyaloperonospora parasitica.</text>
</comment>
<comment type="similarity">
    <text evidence="6">Belongs to the glycosyltransferase 48 family.</text>
</comment>
<gene>
    <name type="primary">CALS12</name>
    <name type="synonym">GSL5</name>
    <name type="synonym">PMR4</name>
    <name type="ordered locus">At4g03550</name>
    <name type="ORF">F9H3.18</name>
    <name type="ORF">T5L23.4</name>
</gene>
<evidence type="ECO:0000255" key="1"/>
<evidence type="ECO:0000269" key="2">
    <source>
    </source>
</evidence>
<evidence type="ECO:0000269" key="3">
    <source>
    </source>
</evidence>
<evidence type="ECO:0000269" key="4">
    <source>
    </source>
</evidence>
<evidence type="ECO:0000269" key="5">
    <source>
    </source>
</evidence>
<evidence type="ECO:0000305" key="6"/>